<sequence>MSDPLIVSYNDSAIYQSDINILKSNQWLNDSIISFYLEWLKDGGEDNKNKIPNQVLLLSPSVVFCCSFVESEQEIQLMFEQPLSLKTKEVIFFPLTNNRDPNVIGGGTHWSLLIFIKSLNKFIYYDSINSFNSSDAIFIISKFKFLLSSPPPKTNLKEFLINQKTPQQQNGYDCGLYVLSIIEELLKLIIKENENNKGEENKISYKDLLLSEFTNELLFKEITPNYIKDKRVEILNTILKLKK</sequence>
<reference key="1">
    <citation type="journal article" date="2005" name="Nature">
        <title>The genome of the social amoeba Dictyostelium discoideum.</title>
        <authorList>
            <person name="Eichinger L."/>
            <person name="Pachebat J.A."/>
            <person name="Gloeckner G."/>
            <person name="Rajandream M.A."/>
            <person name="Sucgang R."/>
            <person name="Berriman M."/>
            <person name="Song J."/>
            <person name="Olsen R."/>
            <person name="Szafranski K."/>
            <person name="Xu Q."/>
            <person name="Tunggal B."/>
            <person name="Kummerfeld S."/>
            <person name="Madera M."/>
            <person name="Konfortov B.A."/>
            <person name="Rivero F."/>
            <person name="Bankier A.T."/>
            <person name="Lehmann R."/>
            <person name="Hamlin N."/>
            <person name="Davies R."/>
            <person name="Gaudet P."/>
            <person name="Fey P."/>
            <person name="Pilcher K."/>
            <person name="Chen G."/>
            <person name="Saunders D."/>
            <person name="Sodergren E.J."/>
            <person name="Davis P."/>
            <person name="Kerhornou A."/>
            <person name="Nie X."/>
            <person name="Hall N."/>
            <person name="Anjard C."/>
            <person name="Hemphill L."/>
            <person name="Bason N."/>
            <person name="Farbrother P."/>
            <person name="Desany B."/>
            <person name="Just E."/>
            <person name="Morio T."/>
            <person name="Rost R."/>
            <person name="Churcher C.M."/>
            <person name="Cooper J."/>
            <person name="Haydock S."/>
            <person name="van Driessche N."/>
            <person name="Cronin A."/>
            <person name="Goodhead I."/>
            <person name="Muzny D.M."/>
            <person name="Mourier T."/>
            <person name="Pain A."/>
            <person name="Lu M."/>
            <person name="Harper D."/>
            <person name="Lindsay R."/>
            <person name="Hauser H."/>
            <person name="James K.D."/>
            <person name="Quiles M."/>
            <person name="Madan Babu M."/>
            <person name="Saito T."/>
            <person name="Buchrieser C."/>
            <person name="Wardroper A."/>
            <person name="Felder M."/>
            <person name="Thangavelu M."/>
            <person name="Johnson D."/>
            <person name="Knights A."/>
            <person name="Loulseged H."/>
            <person name="Mungall K.L."/>
            <person name="Oliver K."/>
            <person name="Price C."/>
            <person name="Quail M.A."/>
            <person name="Urushihara H."/>
            <person name="Hernandez J."/>
            <person name="Rabbinowitsch E."/>
            <person name="Steffen D."/>
            <person name="Sanders M."/>
            <person name="Ma J."/>
            <person name="Kohara Y."/>
            <person name="Sharp S."/>
            <person name="Simmonds M.N."/>
            <person name="Spiegler S."/>
            <person name="Tivey A."/>
            <person name="Sugano S."/>
            <person name="White B."/>
            <person name="Walker D."/>
            <person name="Woodward J.R."/>
            <person name="Winckler T."/>
            <person name="Tanaka Y."/>
            <person name="Shaulsky G."/>
            <person name="Schleicher M."/>
            <person name="Weinstock G.M."/>
            <person name="Rosenthal A."/>
            <person name="Cox E.C."/>
            <person name="Chisholm R.L."/>
            <person name="Gibbs R.A."/>
            <person name="Loomis W.F."/>
            <person name="Platzer M."/>
            <person name="Kay R.R."/>
            <person name="Williams J.G."/>
            <person name="Dear P.H."/>
            <person name="Noegel A.A."/>
            <person name="Barrell B.G."/>
            <person name="Kuspa A."/>
        </authorList>
    </citation>
    <scope>NUCLEOTIDE SEQUENCE [LARGE SCALE GENOMIC DNA]</scope>
    <source>
        <strain>AX4</strain>
    </source>
</reference>
<name>SENP8_DICDI</name>
<evidence type="ECO:0000250" key="1"/>
<evidence type="ECO:0000305" key="2"/>
<dbReference type="EC" id="3.4.22.-"/>
<dbReference type="EMBL" id="AAFI02000024">
    <property type="protein sequence ID" value="EAL67999.1"/>
    <property type="molecule type" value="Genomic_DNA"/>
</dbReference>
<dbReference type="RefSeq" id="XP_641968.1">
    <property type="nucleotide sequence ID" value="XM_636876.1"/>
</dbReference>
<dbReference type="SMR" id="Q54XR2"/>
<dbReference type="FunCoup" id="Q54XR2">
    <property type="interactions" value="365"/>
</dbReference>
<dbReference type="STRING" id="44689.Q54XR2"/>
<dbReference type="PaxDb" id="44689-DDB0304995"/>
<dbReference type="EnsemblProtists" id="EAL67999">
    <property type="protein sequence ID" value="EAL67999"/>
    <property type="gene ID" value="DDB_G0278795"/>
</dbReference>
<dbReference type="GeneID" id="8621700"/>
<dbReference type="KEGG" id="ddi:DDB_G0278795"/>
<dbReference type="dictyBase" id="DDB_G0278795">
    <property type="gene designation" value="senp8"/>
</dbReference>
<dbReference type="VEuPathDB" id="AmoebaDB:DDB_G0278795"/>
<dbReference type="eggNOG" id="KOG3246">
    <property type="taxonomic scope" value="Eukaryota"/>
</dbReference>
<dbReference type="HOGENOM" id="CLU_043678_3_1_1"/>
<dbReference type="InParanoid" id="Q54XR2"/>
<dbReference type="OMA" id="GFYFEYL"/>
<dbReference type="PhylomeDB" id="Q54XR2"/>
<dbReference type="PRO" id="PR:Q54XR2"/>
<dbReference type="Proteomes" id="UP000002195">
    <property type="component" value="Chromosome 3"/>
</dbReference>
<dbReference type="GO" id="GO:0005634">
    <property type="term" value="C:nucleus"/>
    <property type="evidence" value="ECO:0000318"/>
    <property type="project" value="GO_Central"/>
</dbReference>
<dbReference type="GO" id="GO:0019784">
    <property type="term" value="F:deNEDDylase activity"/>
    <property type="evidence" value="ECO:0007669"/>
    <property type="project" value="InterPro"/>
</dbReference>
<dbReference type="GO" id="GO:0016929">
    <property type="term" value="F:deSUMOylase activity"/>
    <property type="evidence" value="ECO:0000318"/>
    <property type="project" value="GO_Central"/>
</dbReference>
<dbReference type="GO" id="GO:0016926">
    <property type="term" value="P:protein desumoylation"/>
    <property type="evidence" value="ECO:0000318"/>
    <property type="project" value="GO_Central"/>
</dbReference>
<dbReference type="GO" id="GO:0006508">
    <property type="term" value="P:proteolysis"/>
    <property type="evidence" value="ECO:0007669"/>
    <property type="project" value="UniProtKB-KW"/>
</dbReference>
<dbReference type="Gene3D" id="3.40.395.10">
    <property type="entry name" value="Adenoviral Proteinase, Chain A"/>
    <property type="match status" value="1"/>
</dbReference>
<dbReference type="InterPro" id="IPR044613">
    <property type="entry name" value="Nep1/2-like"/>
</dbReference>
<dbReference type="InterPro" id="IPR038765">
    <property type="entry name" value="Papain-like_cys_pep_sf"/>
</dbReference>
<dbReference type="InterPro" id="IPR003653">
    <property type="entry name" value="Peptidase_C48_C"/>
</dbReference>
<dbReference type="PANTHER" id="PTHR46468">
    <property type="entry name" value="SENTRIN-SPECIFIC PROTEASE 8"/>
    <property type="match status" value="1"/>
</dbReference>
<dbReference type="PANTHER" id="PTHR46468:SF1">
    <property type="entry name" value="SENTRIN-SPECIFIC PROTEASE 8"/>
    <property type="match status" value="1"/>
</dbReference>
<dbReference type="Pfam" id="PF02902">
    <property type="entry name" value="Peptidase_C48"/>
    <property type="match status" value="1"/>
</dbReference>
<dbReference type="SUPFAM" id="SSF54001">
    <property type="entry name" value="Cysteine proteinases"/>
    <property type="match status" value="1"/>
</dbReference>
<dbReference type="PROSITE" id="PS50600">
    <property type="entry name" value="ULP_PROTEASE"/>
    <property type="match status" value="1"/>
</dbReference>
<keyword id="KW-0378">Hydrolase</keyword>
<keyword id="KW-0645">Protease</keyword>
<keyword id="KW-1185">Reference proteome</keyword>
<keyword id="KW-0788">Thiol protease</keyword>
<keyword id="KW-0833">Ubl conjugation pathway</keyword>
<protein>
    <recommendedName>
        <fullName>Probable sentrin-specific protease 8</fullName>
        <ecNumber>3.4.22.-</ecNumber>
    </recommendedName>
    <alternativeName>
        <fullName>Deneddylase</fullName>
    </alternativeName>
    <alternativeName>
        <fullName>Sentrin/sumo-specific protease senp8</fullName>
    </alternativeName>
</protein>
<accession>Q54XR2</accession>
<feature type="chain" id="PRO_0000328419" description="Probable sentrin-specific protease 8">
    <location>
        <begin position="1"/>
        <end position="243"/>
    </location>
</feature>
<feature type="region of interest" description="Protease" evidence="1">
    <location>
        <begin position="12"/>
        <end position="185"/>
    </location>
</feature>
<feature type="active site" evidence="1">
    <location>
        <position position="109"/>
    </location>
</feature>
<feature type="active site" evidence="1">
    <location>
        <position position="126"/>
    </location>
</feature>
<feature type="active site" description="Nucleophile" evidence="1">
    <location>
        <position position="174"/>
    </location>
</feature>
<gene>
    <name type="primary">senp8</name>
    <name type="ORF">DDB_G0278795</name>
</gene>
<proteinExistence type="inferred from homology"/>
<organism>
    <name type="scientific">Dictyostelium discoideum</name>
    <name type="common">Social amoeba</name>
    <dbReference type="NCBI Taxonomy" id="44689"/>
    <lineage>
        <taxon>Eukaryota</taxon>
        <taxon>Amoebozoa</taxon>
        <taxon>Evosea</taxon>
        <taxon>Eumycetozoa</taxon>
        <taxon>Dictyostelia</taxon>
        <taxon>Dictyosteliales</taxon>
        <taxon>Dictyosteliaceae</taxon>
        <taxon>Dictyostelium</taxon>
    </lineage>
</organism>
<comment type="function">
    <text evidence="1">Protease that catalyzes two essential functions in the nedd8 pathway: processing of full-length nedd8 to its mature form and deconjugation of nedd8 from targeted proteins.</text>
</comment>
<comment type="similarity">
    <text evidence="2">Belongs to the peptidase C48 family.</text>
</comment>